<feature type="chain" id="PRO_1000117492" description="3-dehydroquinate synthase">
    <location>
        <begin position="1"/>
        <end position="363"/>
    </location>
</feature>
<feature type="binding site" evidence="1">
    <location>
        <begin position="103"/>
        <end position="107"/>
    </location>
    <ligand>
        <name>NAD(+)</name>
        <dbReference type="ChEBI" id="CHEBI:57540"/>
    </ligand>
</feature>
<feature type="binding site" evidence="1">
    <location>
        <begin position="127"/>
        <end position="128"/>
    </location>
    <ligand>
        <name>NAD(+)</name>
        <dbReference type="ChEBI" id="CHEBI:57540"/>
    </ligand>
</feature>
<feature type="binding site" evidence="1">
    <location>
        <position position="139"/>
    </location>
    <ligand>
        <name>NAD(+)</name>
        <dbReference type="ChEBI" id="CHEBI:57540"/>
    </ligand>
</feature>
<feature type="binding site" evidence="1">
    <location>
        <position position="148"/>
    </location>
    <ligand>
        <name>NAD(+)</name>
        <dbReference type="ChEBI" id="CHEBI:57540"/>
    </ligand>
</feature>
<feature type="binding site" evidence="1">
    <location>
        <begin position="166"/>
        <end position="169"/>
    </location>
    <ligand>
        <name>NAD(+)</name>
        <dbReference type="ChEBI" id="CHEBI:57540"/>
    </ligand>
</feature>
<feature type="binding site" evidence="1">
    <location>
        <position position="181"/>
    </location>
    <ligand>
        <name>Zn(2+)</name>
        <dbReference type="ChEBI" id="CHEBI:29105"/>
    </ligand>
</feature>
<feature type="binding site" evidence="1">
    <location>
        <position position="243"/>
    </location>
    <ligand>
        <name>Zn(2+)</name>
        <dbReference type="ChEBI" id="CHEBI:29105"/>
    </ligand>
</feature>
<feature type="binding site" evidence="1">
    <location>
        <position position="260"/>
    </location>
    <ligand>
        <name>Zn(2+)</name>
        <dbReference type="ChEBI" id="CHEBI:29105"/>
    </ligand>
</feature>
<proteinExistence type="inferred from homology"/>
<evidence type="ECO:0000255" key="1">
    <source>
        <dbReference type="HAMAP-Rule" id="MF_00110"/>
    </source>
</evidence>
<keyword id="KW-0028">Amino-acid biosynthesis</keyword>
<keyword id="KW-0057">Aromatic amino acid biosynthesis</keyword>
<keyword id="KW-0170">Cobalt</keyword>
<keyword id="KW-0963">Cytoplasm</keyword>
<keyword id="KW-0456">Lyase</keyword>
<keyword id="KW-0479">Metal-binding</keyword>
<keyword id="KW-0520">NAD</keyword>
<keyword id="KW-0547">Nucleotide-binding</keyword>
<keyword id="KW-0862">Zinc</keyword>
<accession>B1HTD2</accession>
<sequence length="363" mass="40794">MRVPVATKSHHYEVLLGHRFLTEAIQTYADQLNKADKFFVFTDAHVWEAQGDYFKANFPYDFEVFILPGGEACKTFEQYYAAQTFLLEQKCSRKSFVFAFGGGAVGDLTGFVAATYMRGIPFIQIPTTILAHDSAVGGKTAINHPLGKNMIGAFYQPEGVIYDTVFSETLPVREIRSGTAELIKHAMISDSAWLEELMAADSVMHFNQQELAMQLKKGIEVKAKIVAEDETEQSVRKFLNLGHTYGHAIEAAAGYGKVAHGEAVMIGLVYCLLLSERYGELNRPFTKAFLQFAVKNGYPFEAVNDYTFEQLTSYLMKDKKTEYGILQFVLLEKIGKPFVRAIDLKECKEVDAEYRELLAEVLV</sequence>
<organism>
    <name type="scientific">Lysinibacillus sphaericus (strain C3-41)</name>
    <dbReference type="NCBI Taxonomy" id="444177"/>
    <lineage>
        <taxon>Bacteria</taxon>
        <taxon>Bacillati</taxon>
        <taxon>Bacillota</taxon>
        <taxon>Bacilli</taxon>
        <taxon>Bacillales</taxon>
        <taxon>Bacillaceae</taxon>
        <taxon>Lysinibacillus</taxon>
    </lineage>
</organism>
<gene>
    <name evidence="1" type="primary">aroB</name>
    <name type="ordered locus">Bsph_1961</name>
</gene>
<name>AROB_LYSSC</name>
<dbReference type="EC" id="4.2.3.4" evidence="1"/>
<dbReference type="EMBL" id="CP000817">
    <property type="protein sequence ID" value="ACA39548.1"/>
    <property type="molecule type" value="Genomic_DNA"/>
</dbReference>
<dbReference type="RefSeq" id="WP_012293644.1">
    <property type="nucleotide sequence ID" value="NC_010382.1"/>
</dbReference>
<dbReference type="SMR" id="B1HTD2"/>
<dbReference type="EnsemblBacteria" id="ACA39548">
    <property type="protein sequence ID" value="ACA39548"/>
    <property type="gene ID" value="Bsph_1961"/>
</dbReference>
<dbReference type="KEGG" id="lsp:Bsph_1961"/>
<dbReference type="HOGENOM" id="CLU_001201_0_1_9"/>
<dbReference type="UniPathway" id="UPA00053">
    <property type="reaction ID" value="UER00085"/>
</dbReference>
<dbReference type="Proteomes" id="UP000002164">
    <property type="component" value="Chromosome"/>
</dbReference>
<dbReference type="GO" id="GO:0005737">
    <property type="term" value="C:cytoplasm"/>
    <property type="evidence" value="ECO:0007669"/>
    <property type="project" value="UniProtKB-SubCell"/>
</dbReference>
<dbReference type="GO" id="GO:0003856">
    <property type="term" value="F:3-dehydroquinate synthase activity"/>
    <property type="evidence" value="ECO:0007669"/>
    <property type="project" value="UniProtKB-UniRule"/>
</dbReference>
<dbReference type="GO" id="GO:0046872">
    <property type="term" value="F:metal ion binding"/>
    <property type="evidence" value="ECO:0007669"/>
    <property type="project" value="UniProtKB-KW"/>
</dbReference>
<dbReference type="GO" id="GO:0000166">
    <property type="term" value="F:nucleotide binding"/>
    <property type="evidence" value="ECO:0007669"/>
    <property type="project" value="UniProtKB-KW"/>
</dbReference>
<dbReference type="GO" id="GO:0008652">
    <property type="term" value="P:amino acid biosynthetic process"/>
    <property type="evidence" value="ECO:0007669"/>
    <property type="project" value="UniProtKB-KW"/>
</dbReference>
<dbReference type="GO" id="GO:0009073">
    <property type="term" value="P:aromatic amino acid family biosynthetic process"/>
    <property type="evidence" value="ECO:0007669"/>
    <property type="project" value="UniProtKB-KW"/>
</dbReference>
<dbReference type="GO" id="GO:0009423">
    <property type="term" value="P:chorismate biosynthetic process"/>
    <property type="evidence" value="ECO:0007669"/>
    <property type="project" value="UniProtKB-UniRule"/>
</dbReference>
<dbReference type="CDD" id="cd08195">
    <property type="entry name" value="DHQS"/>
    <property type="match status" value="1"/>
</dbReference>
<dbReference type="FunFam" id="3.40.50.1970:FF:000007">
    <property type="entry name" value="Pentafunctional AROM polypeptide"/>
    <property type="match status" value="1"/>
</dbReference>
<dbReference type="Gene3D" id="3.40.50.1970">
    <property type="match status" value="1"/>
</dbReference>
<dbReference type="Gene3D" id="1.20.1090.10">
    <property type="entry name" value="Dehydroquinate synthase-like - alpha domain"/>
    <property type="match status" value="1"/>
</dbReference>
<dbReference type="HAMAP" id="MF_00110">
    <property type="entry name" value="DHQ_synthase"/>
    <property type="match status" value="1"/>
</dbReference>
<dbReference type="InterPro" id="IPR050071">
    <property type="entry name" value="Dehydroquinate_synthase"/>
</dbReference>
<dbReference type="InterPro" id="IPR016037">
    <property type="entry name" value="DHQ_synth_AroB"/>
</dbReference>
<dbReference type="InterPro" id="IPR030963">
    <property type="entry name" value="DHQ_synth_fam"/>
</dbReference>
<dbReference type="InterPro" id="IPR030960">
    <property type="entry name" value="DHQS/DOIS_N"/>
</dbReference>
<dbReference type="InterPro" id="IPR056179">
    <property type="entry name" value="DHQS_C"/>
</dbReference>
<dbReference type="NCBIfam" id="TIGR01357">
    <property type="entry name" value="aroB"/>
    <property type="match status" value="1"/>
</dbReference>
<dbReference type="PANTHER" id="PTHR43622">
    <property type="entry name" value="3-DEHYDROQUINATE SYNTHASE"/>
    <property type="match status" value="1"/>
</dbReference>
<dbReference type="PANTHER" id="PTHR43622:SF7">
    <property type="entry name" value="3-DEHYDROQUINATE SYNTHASE, CHLOROPLASTIC"/>
    <property type="match status" value="1"/>
</dbReference>
<dbReference type="Pfam" id="PF01761">
    <property type="entry name" value="DHQ_synthase"/>
    <property type="match status" value="1"/>
</dbReference>
<dbReference type="Pfam" id="PF24621">
    <property type="entry name" value="DHQS_C"/>
    <property type="match status" value="1"/>
</dbReference>
<dbReference type="PIRSF" id="PIRSF001455">
    <property type="entry name" value="DHQ_synth"/>
    <property type="match status" value="1"/>
</dbReference>
<dbReference type="SUPFAM" id="SSF56796">
    <property type="entry name" value="Dehydroquinate synthase-like"/>
    <property type="match status" value="1"/>
</dbReference>
<comment type="function">
    <text evidence="1">Catalyzes the conversion of 3-deoxy-D-arabino-heptulosonate 7-phosphate (DAHP) to dehydroquinate (DHQ).</text>
</comment>
<comment type="catalytic activity">
    <reaction evidence="1">
        <text>7-phospho-2-dehydro-3-deoxy-D-arabino-heptonate = 3-dehydroquinate + phosphate</text>
        <dbReference type="Rhea" id="RHEA:21968"/>
        <dbReference type="ChEBI" id="CHEBI:32364"/>
        <dbReference type="ChEBI" id="CHEBI:43474"/>
        <dbReference type="ChEBI" id="CHEBI:58394"/>
        <dbReference type="EC" id="4.2.3.4"/>
    </reaction>
</comment>
<comment type="cofactor">
    <cofactor evidence="1">
        <name>Co(2+)</name>
        <dbReference type="ChEBI" id="CHEBI:48828"/>
    </cofactor>
    <cofactor evidence="1">
        <name>Zn(2+)</name>
        <dbReference type="ChEBI" id="CHEBI:29105"/>
    </cofactor>
    <text evidence="1">Binds 1 divalent metal cation per subunit. Can use either Co(2+) or Zn(2+).</text>
</comment>
<comment type="cofactor">
    <cofactor evidence="1">
        <name>NAD(+)</name>
        <dbReference type="ChEBI" id="CHEBI:57540"/>
    </cofactor>
</comment>
<comment type="pathway">
    <text evidence="1">Metabolic intermediate biosynthesis; chorismate biosynthesis; chorismate from D-erythrose 4-phosphate and phosphoenolpyruvate: step 2/7.</text>
</comment>
<comment type="subcellular location">
    <subcellularLocation>
        <location evidence="1">Cytoplasm</location>
    </subcellularLocation>
</comment>
<comment type="similarity">
    <text evidence="1">Belongs to the sugar phosphate cyclases superfamily. Dehydroquinate synthase family.</text>
</comment>
<protein>
    <recommendedName>
        <fullName evidence="1">3-dehydroquinate synthase</fullName>
        <shortName evidence="1">DHQS</shortName>
        <ecNumber evidence="1">4.2.3.4</ecNumber>
    </recommendedName>
</protein>
<reference key="1">
    <citation type="journal article" date="2008" name="J. Bacteriol.">
        <title>Complete genome sequence of the mosquitocidal bacterium Bacillus sphaericus C3-41 and comparison with those of closely related Bacillus species.</title>
        <authorList>
            <person name="Hu X."/>
            <person name="Fan W."/>
            <person name="Han B."/>
            <person name="Liu H."/>
            <person name="Zheng D."/>
            <person name="Li Q."/>
            <person name="Dong W."/>
            <person name="Yan J."/>
            <person name="Gao M."/>
            <person name="Berry C."/>
            <person name="Yuan Z."/>
        </authorList>
    </citation>
    <scope>NUCLEOTIDE SEQUENCE [LARGE SCALE GENOMIC DNA]</scope>
    <source>
        <strain>C3-41</strain>
    </source>
</reference>